<name>PNP_DEIGD</name>
<protein>
    <recommendedName>
        <fullName evidence="1">Polyribonucleotide nucleotidyltransferase</fullName>
        <ecNumber evidence="1">2.7.7.8</ecNumber>
    </recommendedName>
    <alternativeName>
        <fullName evidence="1">Polynucleotide phosphorylase</fullName>
        <shortName evidence="1">PNPase</shortName>
    </alternativeName>
</protein>
<dbReference type="EC" id="2.7.7.8" evidence="1"/>
<dbReference type="EMBL" id="CP000359">
    <property type="protein sequence ID" value="ABF44704.1"/>
    <property type="molecule type" value="Genomic_DNA"/>
</dbReference>
<dbReference type="RefSeq" id="WP_011529548.1">
    <property type="nucleotide sequence ID" value="NC_008025.1"/>
</dbReference>
<dbReference type="SMR" id="Q1J1D0"/>
<dbReference type="STRING" id="319795.Dgeo_0401"/>
<dbReference type="KEGG" id="dge:Dgeo_0401"/>
<dbReference type="eggNOG" id="COG1185">
    <property type="taxonomic scope" value="Bacteria"/>
</dbReference>
<dbReference type="HOGENOM" id="CLU_004217_2_2_0"/>
<dbReference type="Proteomes" id="UP000002431">
    <property type="component" value="Chromosome"/>
</dbReference>
<dbReference type="GO" id="GO:0005829">
    <property type="term" value="C:cytosol"/>
    <property type="evidence" value="ECO:0007669"/>
    <property type="project" value="TreeGrafter"/>
</dbReference>
<dbReference type="GO" id="GO:0000175">
    <property type="term" value="F:3'-5'-RNA exonuclease activity"/>
    <property type="evidence" value="ECO:0007669"/>
    <property type="project" value="TreeGrafter"/>
</dbReference>
<dbReference type="GO" id="GO:0000287">
    <property type="term" value="F:magnesium ion binding"/>
    <property type="evidence" value="ECO:0007669"/>
    <property type="project" value="UniProtKB-UniRule"/>
</dbReference>
<dbReference type="GO" id="GO:0004654">
    <property type="term" value="F:polyribonucleotide nucleotidyltransferase activity"/>
    <property type="evidence" value="ECO:0007669"/>
    <property type="project" value="UniProtKB-UniRule"/>
</dbReference>
<dbReference type="GO" id="GO:0003723">
    <property type="term" value="F:RNA binding"/>
    <property type="evidence" value="ECO:0007669"/>
    <property type="project" value="UniProtKB-UniRule"/>
</dbReference>
<dbReference type="GO" id="GO:0006402">
    <property type="term" value="P:mRNA catabolic process"/>
    <property type="evidence" value="ECO:0007669"/>
    <property type="project" value="UniProtKB-UniRule"/>
</dbReference>
<dbReference type="GO" id="GO:0006396">
    <property type="term" value="P:RNA processing"/>
    <property type="evidence" value="ECO:0007669"/>
    <property type="project" value="InterPro"/>
</dbReference>
<dbReference type="CDD" id="cd02393">
    <property type="entry name" value="KH-I_PNPase"/>
    <property type="match status" value="1"/>
</dbReference>
<dbReference type="CDD" id="cd11363">
    <property type="entry name" value="RNase_PH_PNPase_1"/>
    <property type="match status" value="1"/>
</dbReference>
<dbReference type="CDD" id="cd11364">
    <property type="entry name" value="RNase_PH_PNPase_2"/>
    <property type="match status" value="1"/>
</dbReference>
<dbReference type="CDD" id="cd04472">
    <property type="entry name" value="S1_PNPase"/>
    <property type="match status" value="1"/>
</dbReference>
<dbReference type="FunFam" id="3.30.1370.10:FF:000001">
    <property type="entry name" value="Polyribonucleotide nucleotidyltransferase"/>
    <property type="match status" value="1"/>
</dbReference>
<dbReference type="FunFam" id="3.30.230.70:FF:000001">
    <property type="entry name" value="Polyribonucleotide nucleotidyltransferase"/>
    <property type="match status" value="1"/>
</dbReference>
<dbReference type="FunFam" id="3.30.230.70:FF:000002">
    <property type="entry name" value="Polyribonucleotide nucleotidyltransferase"/>
    <property type="match status" value="1"/>
</dbReference>
<dbReference type="Gene3D" id="3.30.230.70">
    <property type="entry name" value="GHMP Kinase, N-terminal domain"/>
    <property type="match status" value="2"/>
</dbReference>
<dbReference type="Gene3D" id="3.30.1370.10">
    <property type="entry name" value="K Homology domain, type 1"/>
    <property type="match status" value="1"/>
</dbReference>
<dbReference type="Gene3D" id="2.40.50.140">
    <property type="entry name" value="Nucleic acid-binding proteins"/>
    <property type="match status" value="1"/>
</dbReference>
<dbReference type="HAMAP" id="MF_01595">
    <property type="entry name" value="PNPase"/>
    <property type="match status" value="1"/>
</dbReference>
<dbReference type="InterPro" id="IPR001247">
    <property type="entry name" value="ExoRNase_PH_dom1"/>
</dbReference>
<dbReference type="InterPro" id="IPR015847">
    <property type="entry name" value="ExoRNase_PH_dom2"/>
</dbReference>
<dbReference type="InterPro" id="IPR036345">
    <property type="entry name" value="ExoRNase_PH_dom2_sf"/>
</dbReference>
<dbReference type="InterPro" id="IPR004087">
    <property type="entry name" value="KH_dom"/>
</dbReference>
<dbReference type="InterPro" id="IPR004088">
    <property type="entry name" value="KH_dom_type_1"/>
</dbReference>
<dbReference type="InterPro" id="IPR036612">
    <property type="entry name" value="KH_dom_type_1_sf"/>
</dbReference>
<dbReference type="InterPro" id="IPR012340">
    <property type="entry name" value="NA-bd_OB-fold"/>
</dbReference>
<dbReference type="InterPro" id="IPR012162">
    <property type="entry name" value="PNPase"/>
</dbReference>
<dbReference type="InterPro" id="IPR027408">
    <property type="entry name" value="PNPase/RNase_PH_dom_sf"/>
</dbReference>
<dbReference type="InterPro" id="IPR015848">
    <property type="entry name" value="PNPase_PH_RNA-bd_bac/org-type"/>
</dbReference>
<dbReference type="InterPro" id="IPR020568">
    <property type="entry name" value="Ribosomal_Su5_D2-typ_SF"/>
</dbReference>
<dbReference type="InterPro" id="IPR003029">
    <property type="entry name" value="S1_domain"/>
</dbReference>
<dbReference type="NCBIfam" id="TIGR03591">
    <property type="entry name" value="polynuc_phos"/>
    <property type="match status" value="1"/>
</dbReference>
<dbReference type="NCBIfam" id="NF008805">
    <property type="entry name" value="PRK11824.1"/>
    <property type="match status" value="1"/>
</dbReference>
<dbReference type="PANTHER" id="PTHR11252">
    <property type="entry name" value="POLYRIBONUCLEOTIDE NUCLEOTIDYLTRANSFERASE"/>
    <property type="match status" value="1"/>
</dbReference>
<dbReference type="PANTHER" id="PTHR11252:SF0">
    <property type="entry name" value="POLYRIBONUCLEOTIDE NUCLEOTIDYLTRANSFERASE 1, MITOCHONDRIAL"/>
    <property type="match status" value="1"/>
</dbReference>
<dbReference type="Pfam" id="PF00013">
    <property type="entry name" value="KH_1"/>
    <property type="match status" value="1"/>
</dbReference>
<dbReference type="Pfam" id="PF03726">
    <property type="entry name" value="PNPase"/>
    <property type="match status" value="1"/>
</dbReference>
<dbReference type="Pfam" id="PF01138">
    <property type="entry name" value="RNase_PH"/>
    <property type="match status" value="2"/>
</dbReference>
<dbReference type="Pfam" id="PF03725">
    <property type="entry name" value="RNase_PH_C"/>
    <property type="match status" value="2"/>
</dbReference>
<dbReference type="Pfam" id="PF00575">
    <property type="entry name" value="S1"/>
    <property type="match status" value="1"/>
</dbReference>
<dbReference type="PIRSF" id="PIRSF005499">
    <property type="entry name" value="PNPase"/>
    <property type="match status" value="1"/>
</dbReference>
<dbReference type="SMART" id="SM00322">
    <property type="entry name" value="KH"/>
    <property type="match status" value="1"/>
</dbReference>
<dbReference type="SMART" id="SM00316">
    <property type="entry name" value="S1"/>
    <property type="match status" value="1"/>
</dbReference>
<dbReference type="SUPFAM" id="SSF54791">
    <property type="entry name" value="Eukaryotic type KH-domain (KH-domain type I)"/>
    <property type="match status" value="1"/>
</dbReference>
<dbReference type="SUPFAM" id="SSF50249">
    <property type="entry name" value="Nucleic acid-binding proteins"/>
    <property type="match status" value="1"/>
</dbReference>
<dbReference type="SUPFAM" id="SSF55666">
    <property type="entry name" value="Ribonuclease PH domain 2-like"/>
    <property type="match status" value="2"/>
</dbReference>
<dbReference type="SUPFAM" id="SSF54211">
    <property type="entry name" value="Ribosomal protein S5 domain 2-like"/>
    <property type="match status" value="2"/>
</dbReference>
<dbReference type="PROSITE" id="PS50084">
    <property type="entry name" value="KH_TYPE_1"/>
    <property type="match status" value="1"/>
</dbReference>
<dbReference type="PROSITE" id="PS50126">
    <property type="entry name" value="S1"/>
    <property type="match status" value="1"/>
</dbReference>
<keyword id="KW-0963">Cytoplasm</keyword>
<keyword id="KW-0460">Magnesium</keyword>
<keyword id="KW-0479">Metal-binding</keyword>
<keyword id="KW-0548">Nucleotidyltransferase</keyword>
<keyword id="KW-0694">RNA-binding</keyword>
<keyword id="KW-0808">Transferase</keyword>
<proteinExistence type="inferred from homology"/>
<evidence type="ECO:0000255" key="1">
    <source>
        <dbReference type="HAMAP-Rule" id="MF_01595"/>
    </source>
</evidence>
<evidence type="ECO:0000256" key="2">
    <source>
        <dbReference type="SAM" id="MobiDB-lite"/>
    </source>
</evidence>
<accession>Q1J1D0</accession>
<comment type="function">
    <text evidence="1">Involved in mRNA degradation. Catalyzes the phosphorolysis of single-stranded polyribonucleotides processively in the 3'- to 5'-direction.</text>
</comment>
<comment type="catalytic activity">
    <reaction evidence="1">
        <text>RNA(n+1) + phosphate = RNA(n) + a ribonucleoside 5'-diphosphate</text>
        <dbReference type="Rhea" id="RHEA:22096"/>
        <dbReference type="Rhea" id="RHEA-COMP:14527"/>
        <dbReference type="Rhea" id="RHEA-COMP:17342"/>
        <dbReference type="ChEBI" id="CHEBI:43474"/>
        <dbReference type="ChEBI" id="CHEBI:57930"/>
        <dbReference type="ChEBI" id="CHEBI:140395"/>
        <dbReference type="EC" id="2.7.7.8"/>
    </reaction>
</comment>
<comment type="cofactor">
    <cofactor evidence="1">
        <name>Mg(2+)</name>
        <dbReference type="ChEBI" id="CHEBI:18420"/>
    </cofactor>
</comment>
<comment type="subcellular location">
    <subcellularLocation>
        <location evidence="1">Cytoplasm</location>
    </subcellularLocation>
</comment>
<comment type="similarity">
    <text evidence="1">Belongs to the polyribonucleotide nucleotidyltransferase family.</text>
</comment>
<reference key="1">
    <citation type="submission" date="2006-04" db="EMBL/GenBank/DDBJ databases">
        <title>Complete sequence of chromosome of Deinococcus geothermalis DSM 11300.</title>
        <authorList>
            <person name="Copeland A."/>
            <person name="Lucas S."/>
            <person name="Lapidus A."/>
            <person name="Barry K."/>
            <person name="Detter J.C."/>
            <person name="Glavina del Rio T."/>
            <person name="Hammon N."/>
            <person name="Israni S."/>
            <person name="Dalin E."/>
            <person name="Tice H."/>
            <person name="Pitluck S."/>
            <person name="Brettin T."/>
            <person name="Bruce D."/>
            <person name="Han C."/>
            <person name="Tapia R."/>
            <person name="Saunders E."/>
            <person name="Gilna P."/>
            <person name="Schmutz J."/>
            <person name="Larimer F."/>
            <person name="Land M."/>
            <person name="Hauser L."/>
            <person name="Kyrpides N."/>
            <person name="Kim E."/>
            <person name="Daly M.J."/>
            <person name="Fredrickson J.K."/>
            <person name="Makarova K.S."/>
            <person name="Gaidamakova E.K."/>
            <person name="Zhai M."/>
            <person name="Richardson P."/>
        </authorList>
    </citation>
    <scope>NUCLEOTIDE SEQUENCE [LARGE SCALE GENOMIC DNA]</scope>
    <source>
        <strain>DSM 11300 / CIP 105573 / AG-3a</strain>
    </source>
</reference>
<sequence length="721" mass="78096">MIAKTYTTMLGGRELSIETGKLAKLASGSVTLRYGDTLLLVTAQAREERSTLDFLPLTVEFEERHYAVGRIPGSFHRREGRPGEHAILSARITDRQIRPLFPKGYRQETQVIITVLSADQQNAPDVLGAIGASAALSLSDIPWNGPTACVRVGMIDGEYVINPTSDQLTRSSLDLVVAGTRDAVNMVEAGAQGVSEETLVGAIEFAHRELQGVLDLIETMRAEVGREKFNFLVDSDLSTDLVPELSEAARAAGLRDALLTTKKQERSANLKALRDRLIAERVPDPEAAGAAEQIEALKAAFAKVEKQELRRLILQEDLRADGRNSKTVRPIWIEARPLPRAHGSAIFTRGETQVLGVTTLGTERDELLVDNLTGETNDRFLLHYNFPPYSTGEVKRVGGQSRREVGHGNLAKRAIRAVLPAFDDFPYVIRVVGEVLESNGSSSMATVCAGTLSLMDAGVPIQAPVAGVAMGLVMEGEQYRILTDILGLEDALGDMDFKVCGTAEGVTALQMDIKVSGVTPAIMREALAQAREARLHILGKMAEVLPAPRPELSPTAPRILTLKINPELIGKVIGPGGKQVRELEAMGAQVTIEEDGNIRIFSADGAAAEAVRQKIEGLTREAKVGEEYEGTVVKTAPFGAFVNLFPGQDGMLHISQMSENRVNAVEDVLNVGDRLRVKIANIDDRGKIDLIRPELEGKIAPREPRAARAGGDRGGRPPRRE</sequence>
<feature type="chain" id="PRO_0000329620" description="Polyribonucleotide nucleotidyltransferase">
    <location>
        <begin position="1"/>
        <end position="721"/>
    </location>
</feature>
<feature type="domain" description="KH" evidence="1">
    <location>
        <begin position="557"/>
        <end position="618"/>
    </location>
</feature>
<feature type="domain" description="S1 motif" evidence="1">
    <location>
        <begin position="625"/>
        <end position="693"/>
    </location>
</feature>
<feature type="region of interest" description="Disordered" evidence="2">
    <location>
        <begin position="696"/>
        <end position="721"/>
    </location>
</feature>
<feature type="binding site" evidence="1">
    <location>
        <position position="490"/>
    </location>
    <ligand>
        <name>Mg(2+)</name>
        <dbReference type="ChEBI" id="CHEBI:18420"/>
    </ligand>
</feature>
<feature type="binding site" evidence="1">
    <location>
        <position position="496"/>
    </location>
    <ligand>
        <name>Mg(2+)</name>
        <dbReference type="ChEBI" id="CHEBI:18420"/>
    </ligand>
</feature>
<organism>
    <name type="scientific">Deinococcus geothermalis (strain DSM 11300 / CIP 105573 / AG-3a)</name>
    <dbReference type="NCBI Taxonomy" id="319795"/>
    <lineage>
        <taxon>Bacteria</taxon>
        <taxon>Thermotogati</taxon>
        <taxon>Deinococcota</taxon>
        <taxon>Deinococci</taxon>
        <taxon>Deinococcales</taxon>
        <taxon>Deinococcaceae</taxon>
        <taxon>Deinococcus</taxon>
    </lineage>
</organism>
<gene>
    <name evidence="1" type="primary">pnp</name>
    <name type="ordered locus">Dgeo_0401</name>
</gene>